<gene>
    <name type="primary">CAL</name>
    <name type="ORF">ARALYDRAFT_890115</name>
</gene>
<reference key="1">
    <citation type="journal article" date="2011" name="Nat. Genet.">
        <title>The Arabidopsis lyrata genome sequence and the basis of rapid genome size change.</title>
        <authorList>
            <person name="Hu T.T."/>
            <person name="Pattyn P."/>
            <person name="Bakker E.G."/>
            <person name="Cao J."/>
            <person name="Cheng J.-F."/>
            <person name="Clark R.M."/>
            <person name="Fahlgren N."/>
            <person name="Fawcett J.A."/>
            <person name="Grimwood J."/>
            <person name="Gundlach H."/>
            <person name="Haberer G."/>
            <person name="Hollister J.D."/>
            <person name="Ossowski S."/>
            <person name="Ottilar R.P."/>
            <person name="Salamov A.A."/>
            <person name="Schneeberger K."/>
            <person name="Spannagl M."/>
            <person name="Wang X."/>
            <person name="Yang L."/>
            <person name="Nasrallah M.E."/>
            <person name="Bergelson J."/>
            <person name="Carrington J.C."/>
            <person name="Gaut B.S."/>
            <person name="Schmutz J."/>
            <person name="Mayer K.F.X."/>
            <person name="Van de Peer Y."/>
            <person name="Grigoriev I.V."/>
            <person name="Nordborg M."/>
            <person name="Weigel D."/>
            <person name="Guo Y.-L."/>
        </authorList>
    </citation>
    <scope>NUCLEOTIDE SEQUENCE [LARGE SCALE GENOMIC DNA]</scope>
    <source>
        <strain>cv. MN47</strain>
    </source>
</reference>
<proteinExistence type="inferred from homology"/>
<organism>
    <name type="scientific">Arabidopsis lyrata subsp. lyrata</name>
    <name type="common">Lyre-leaved rock-cress</name>
    <dbReference type="NCBI Taxonomy" id="81972"/>
    <lineage>
        <taxon>Eukaryota</taxon>
        <taxon>Viridiplantae</taxon>
        <taxon>Streptophyta</taxon>
        <taxon>Embryophyta</taxon>
        <taxon>Tracheophyta</taxon>
        <taxon>Spermatophyta</taxon>
        <taxon>Magnoliopsida</taxon>
        <taxon>eudicotyledons</taxon>
        <taxon>Gunneridae</taxon>
        <taxon>Pentapetalae</taxon>
        <taxon>rosids</taxon>
        <taxon>malvids</taxon>
        <taxon>Brassicales</taxon>
        <taxon>Brassicaceae</taxon>
        <taxon>Camelineae</taxon>
        <taxon>Arabidopsis</taxon>
    </lineage>
</organism>
<accession>D7KQR8</accession>
<feature type="chain" id="PRO_0000417139" description="Transcription factor CAULIFLOWER">
    <location>
        <begin position="1"/>
        <end position="256"/>
    </location>
</feature>
<feature type="domain" description="MADS-box" evidence="2">
    <location>
        <begin position="1"/>
        <end position="61"/>
    </location>
</feature>
<feature type="domain" description="K-box" evidence="3">
    <location>
        <begin position="90"/>
        <end position="180"/>
    </location>
</feature>
<evidence type="ECO:0000250" key="1"/>
<evidence type="ECO:0000255" key="2">
    <source>
        <dbReference type="PROSITE-ProRule" id="PRU00251"/>
    </source>
</evidence>
<evidence type="ECO:0000255" key="3">
    <source>
        <dbReference type="PROSITE-ProRule" id="PRU00629"/>
    </source>
</evidence>
<protein>
    <recommendedName>
        <fullName>Transcription factor CAULIFLOWER</fullName>
        <shortName>AlCAL</shortName>
    </recommendedName>
    <alternativeName>
        <fullName>Agamous-like MADS-box protein CAL</fullName>
    </alternativeName>
</protein>
<dbReference type="EMBL" id="GL348713">
    <property type="protein sequence ID" value="EFH66925.1"/>
    <property type="molecule type" value="Genomic_DNA"/>
</dbReference>
<dbReference type="SMR" id="D7KQR8"/>
<dbReference type="STRING" id="81972.D7KQR8"/>
<dbReference type="EnsemblPlants" id="scaffold_102909.1">
    <property type="protein sequence ID" value="scaffold_102909.1"/>
    <property type="gene ID" value="scaffold_102909.1"/>
</dbReference>
<dbReference type="GeneID" id="9329470"/>
<dbReference type="Gramene" id="scaffold_102909.1">
    <property type="protein sequence ID" value="scaffold_102909.1"/>
    <property type="gene ID" value="scaffold_102909.1"/>
</dbReference>
<dbReference type="KEGG" id="aly:9329470"/>
<dbReference type="eggNOG" id="KOG0014">
    <property type="taxonomic scope" value="Eukaryota"/>
</dbReference>
<dbReference type="HOGENOM" id="CLU_053053_0_2_1"/>
<dbReference type="OrthoDB" id="1898716at2759"/>
<dbReference type="Proteomes" id="UP000008694">
    <property type="component" value="Unassembled WGS sequence"/>
</dbReference>
<dbReference type="GO" id="GO:0005634">
    <property type="term" value="C:nucleus"/>
    <property type="evidence" value="ECO:0007669"/>
    <property type="project" value="UniProtKB-SubCell"/>
</dbReference>
<dbReference type="GO" id="GO:0003700">
    <property type="term" value="F:DNA-binding transcription factor activity"/>
    <property type="evidence" value="ECO:0007669"/>
    <property type="project" value="InterPro"/>
</dbReference>
<dbReference type="GO" id="GO:0046983">
    <property type="term" value="F:protein dimerization activity"/>
    <property type="evidence" value="ECO:0007669"/>
    <property type="project" value="InterPro"/>
</dbReference>
<dbReference type="GO" id="GO:0000977">
    <property type="term" value="F:RNA polymerase II transcription regulatory region sequence-specific DNA binding"/>
    <property type="evidence" value="ECO:0007669"/>
    <property type="project" value="InterPro"/>
</dbReference>
<dbReference type="GO" id="GO:0030154">
    <property type="term" value="P:cell differentiation"/>
    <property type="evidence" value="ECO:0007669"/>
    <property type="project" value="UniProtKB-KW"/>
</dbReference>
<dbReference type="GO" id="GO:0010582">
    <property type="term" value="P:floral meristem determinacy"/>
    <property type="evidence" value="ECO:0007669"/>
    <property type="project" value="EnsemblPlants"/>
</dbReference>
<dbReference type="GO" id="GO:0045944">
    <property type="term" value="P:positive regulation of transcription by RNA polymerase II"/>
    <property type="evidence" value="ECO:0007669"/>
    <property type="project" value="InterPro"/>
</dbReference>
<dbReference type="CDD" id="cd00265">
    <property type="entry name" value="MADS_MEF2_like"/>
    <property type="match status" value="1"/>
</dbReference>
<dbReference type="FunFam" id="3.40.1810.10:FF:000003">
    <property type="entry name" value="MADS-box transcription factor MADS-MC"/>
    <property type="match status" value="1"/>
</dbReference>
<dbReference type="Gene3D" id="3.40.1810.10">
    <property type="entry name" value="Transcription factor, MADS-box"/>
    <property type="match status" value="1"/>
</dbReference>
<dbReference type="InterPro" id="IPR050142">
    <property type="entry name" value="MADS-box/MEF2_TF"/>
</dbReference>
<dbReference type="InterPro" id="IPR033896">
    <property type="entry name" value="MEF2-like_N"/>
</dbReference>
<dbReference type="InterPro" id="IPR002487">
    <property type="entry name" value="TF_Kbox"/>
</dbReference>
<dbReference type="InterPro" id="IPR002100">
    <property type="entry name" value="TF_MADSbox"/>
</dbReference>
<dbReference type="InterPro" id="IPR036879">
    <property type="entry name" value="TF_MADSbox_sf"/>
</dbReference>
<dbReference type="PANTHER" id="PTHR48019">
    <property type="entry name" value="SERUM RESPONSE FACTOR HOMOLOG"/>
    <property type="match status" value="1"/>
</dbReference>
<dbReference type="Pfam" id="PF01486">
    <property type="entry name" value="K-box"/>
    <property type="match status" value="1"/>
</dbReference>
<dbReference type="Pfam" id="PF00319">
    <property type="entry name" value="SRF-TF"/>
    <property type="match status" value="1"/>
</dbReference>
<dbReference type="PRINTS" id="PR00404">
    <property type="entry name" value="MADSDOMAIN"/>
</dbReference>
<dbReference type="SMART" id="SM00432">
    <property type="entry name" value="MADS"/>
    <property type="match status" value="1"/>
</dbReference>
<dbReference type="SUPFAM" id="SSF55455">
    <property type="entry name" value="SRF-like"/>
    <property type="match status" value="1"/>
</dbReference>
<dbReference type="PROSITE" id="PS51297">
    <property type="entry name" value="K_BOX"/>
    <property type="match status" value="1"/>
</dbReference>
<dbReference type="PROSITE" id="PS00350">
    <property type="entry name" value="MADS_BOX_1"/>
    <property type="match status" value="1"/>
</dbReference>
<dbReference type="PROSITE" id="PS50066">
    <property type="entry name" value="MADS_BOX_2"/>
    <property type="match status" value="1"/>
</dbReference>
<name>CAL_ARALL</name>
<sequence>MGRGRVQLKRIENKINRQVTFSKRRAGLLKKAQEISVLCDAEVSLIVFSHKGKLFEYTSESCMEKVLERYERYSYAERQLIAPDSHINAQPNWSMEYSRLKAKIELLERNQRHYLGEDLEPMSLKDLQNLEQQLETALKHIRSRKNQLMYESLNHLQRKENEIQEENSMLTKQIKERENILRTQQTQCEQLNRNHDVPPPQPQPFQHPHPYMISHQTSPFLNLGGMYQGEDQTAMRRNNLDLTLEPIYNYLGCYAA</sequence>
<comment type="function">
    <text evidence="1">Probable transcription factor that promotes early floral meristem identity in synergy with APETALA1, FRUITFULL and LEAFY. Is required subsequently for the transition of an inflorescence meristem into a floral meristem. Seems to be partially redundant to the function of APETALA1 (By similarity).</text>
</comment>
<comment type="subunit">
    <text evidence="1">Homodimer capable of binding to CArG-box sequences.</text>
</comment>
<comment type="subcellular location">
    <subcellularLocation>
        <location evidence="2">Nucleus</location>
    </subcellularLocation>
</comment>
<keyword id="KW-0010">Activator</keyword>
<keyword id="KW-0175">Coiled coil</keyword>
<keyword id="KW-0217">Developmental protein</keyword>
<keyword id="KW-0221">Differentiation</keyword>
<keyword id="KW-0238">DNA-binding</keyword>
<keyword id="KW-0287">Flowering</keyword>
<keyword id="KW-0539">Nucleus</keyword>
<keyword id="KW-1185">Reference proteome</keyword>
<keyword id="KW-0804">Transcription</keyword>
<keyword id="KW-0805">Transcription regulation</keyword>